<comment type="function">
    <text evidence="2">Mediates the side-chain deamidation of N-terminal glutamine residues to glutamate, an important step in N-end rule pathway of protein degradation. Conversion of the resulting N-terminal glutamine to glutamate renders the protein susceptible to arginylation, polyubiquitination and degradation as specified by the N-end rule. Does not act on substrates with internal or C-terminal glutamine and does not act on non-glutamine residues in any position.</text>
</comment>
<comment type="catalytic activity">
    <reaction evidence="2">
        <text>N-terminal L-glutaminyl-[protein] + H2O = N-terminal L-glutamyl-[protein] + NH4(+)</text>
        <dbReference type="Rhea" id="RHEA:50680"/>
        <dbReference type="Rhea" id="RHEA-COMP:12668"/>
        <dbReference type="Rhea" id="RHEA-COMP:12777"/>
        <dbReference type="ChEBI" id="CHEBI:15377"/>
        <dbReference type="ChEBI" id="CHEBI:28938"/>
        <dbReference type="ChEBI" id="CHEBI:64721"/>
        <dbReference type="ChEBI" id="CHEBI:64722"/>
        <dbReference type="EC" id="3.5.1.122"/>
    </reaction>
</comment>
<comment type="subunit">
    <text evidence="3">Monomer.</text>
</comment>
<comment type="similarity">
    <text evidence="4">Belongs to the NTAQ1 family.</text>
</comment>
<name>NTAQ1_DROVI</name>
<protein>
    <recommendedName>
        <fullName>Protein N-terminal glutamine amidohydrolase</fullName>
        <ecNumber evidence="2">3.5.1.122</ecNumber>
    </recommendedName>
    <alternativeName>
        <fullName>Protein NH2-terminal glutamine deamidase</fullName>
        <shortName>N-terminal Gln amidase</shortName>
        <shortName>Nt(Q)-amidase</shortName>
    </alternativeName>
    <alternativeName>
        <fullName>Protein tungus</fullName>
    </alternativeName>
</protein>
<keyword id="KW-0378">Hydrolase</keyword>
<keyword id="KW-1185">Reference proteome</keyword>
<dbReference type="EC" id="3.5.1.122" evidence="2"/>
<dbReference type="EMBL" id="CH940662">
    <property type="protein sequence ID" value="EDW58697.1"/>
    <property type="molecule type" value="Genomic_DNA"/>
</dbReference>
<dbReference type="RefSeq" id="XP_002059285.1">
    <property type="nucleotide sequence ID" value="XM_002059249.2"/>
</dbReference>
<dbReference type="RefSeq" id="XP_015024267.1">
    <property type="nucleotide sequence ID" value="XM_015168781.1"/>
</dbReference>
<dbReference type="RefSeq" id="XP_015024268.1">
    <property type="nucleotide sequence ID" value="XM_015168782.1"/>
</dbReference>
<dbReference type="RefSeq" id="XP_032291960.1">
    <property type="nucleotide sequence ID" value="XM_032436069.2"/>
</dbReference>
<dbReference type="RefSeq" id="XP_070066195.1">
    <property type="nucleotide sequence ID" value="XM_070210094.1"/>
</dbReference>
<dbReference type="RefSeq" id="XP_070066196.1">
    <property type="nucleotide sequence ID" value="XM_070210095.1"/>
</dbReference>
<dbReference type="SMR" id="B4MDT2"/>
<dbReference type="FunCoup" id="B4MDT2">
    <property type="interactions" value="1480"/>
</dbReference>
<dbReference type="STRING" id="7244.B4MDT2"/>
<dbReference type="EnsemblMetazoa" id="FBtr0435528">
    <property type="protein sequence ID" value="FBpp0392491"/>
    <property type="gene ID" value="FBgn0205288"/>
</dbReference>
<dbReference type="EnsemblMetazoa" id="FBtr0444114">
    <property type="protein sequence ID" value="FBpp0400468"/>
    <property type="gene ID" value="FBgn0205288"/>
</dbReference>
<dbReference type="EnsemblMetazoa" id="FBtr0445150">
    <property type="protein sequence ID" value="FBpp0401431"/>
    <property type="gene ID" value="FBgn0205288"/>
</dbReference>
<dbReference type="EnsemblMetazoa" id="XM_015168782.2">
    <property type="protein sequence ID" value="XP_015024268.1"/>
    <property type="gene ID" value="LOC6635872"/>
</dbReference>
<dbReference type="EnsemblMetazoa" id="XM_032436069.1">
    <property type="protein sequence ID" value="XP_032291960.1"/>
    <property type="gene ID" value="LOC6635872"/>
</dbReference>
<dbReference type="GeneID" id="6635872"/>
<dbReference type="CTD" id="36743"/>
<dbReference type="eggNOG" id="KOG3261">
    <property type="taxonomic scope" value="Eukaryota"/>
</dbReference>
<dbReference type="HOGENOM" id="CLU_091083_1_0_1"/>
<dbReference type="InParanoid" id="B4MDT2"/>
<dbReference type="OMA" id="GWGTVYS"/>
<dbReference type="OrthoDB" id="191192at2759"/>
<dbReference type="PhylomeDB" id="B4MDT2"/>
<dbReference type="ChiTaRS" id="Zasp52">
    <property type="organism name" value="fly"/>
</dbReference>
<dbReference type="Proteomes" id="UP000008792">
    <property type="component" value="Unassembled WGS sequence"/>
</dbReference>
<dbReference type="GO" id="GO:0005829">
    <property type="term" value="C:cytosol"/>
    <property type="evidence" value="ECO:0007669"/>
    <property type="project" value="TreeGrafter"/>
</dbReference>
<dbReference type="GO" id="GO:0005634">
    <property type="term" value="C:nucleus"/>
    <property type="evidence" value="ECO:0007669"/>
    <property type="project" value="TreeGrafter"/>
</dbReference>
<dbReference type="GO" id="GO:0008418">
    <property type="term" value="F:protein-N-terminal asparagine amidohydrolase activity"/>
    <property type="evidence" value="ECO:0007669"/>
    <property type="project" value="InterPro"/>
</dbReference>
<dbReference type="GO" id="GO:0070773">
    <property type="term" value="F:protein-N-terminal glutamine amidohydrolase activity"/>
    <property type="evidence" value="ECO:0007669"/>
    <property type="project" value="UniProtKB-EC"/>
</dbReference>
<dbReference type="FunFam" id="3.10.620.10:FF:000001">
    <property type="entry name" value="Blast:Protein N-terminal glutamine amidohydrolase"/>
    <property type="match status" value="1"/>
</dbReference>
<dbReference type="Gene3D" id="3.10.620.10">
    <property type="entry name" value="Protein N-terminal glutamine amidohydrolase, alpha beta roll"/>
    <property type="match status" value="1"/>
</dbReference>
<dbReference type="InterPro" id="IPR037132">
    <property type="entry name" value="N_Gln_amidohydro_ab_roll_sf"/>
</dbReference>
<dbReference type="InterPro" id="IPR039733">
    <property type="entry name" value="NTAQ1"/>
</dbReference>
<dbReference type="InterPro" id="IPR023128">
    <property type="entry name" value="Prot_N_Gln_amidohydro_ab_roll"/>
</dbReference>
<dbReference type="PANTHER" id="PTHR13035">
    <property type="entry name" value="PROTEIN N-TERMINAL GLUTAMINE AMIDOHYDROLASE"/>
    <property type="match status" value="1"/>
</dbReference>
<dbReference type="PANTHER" id="PTHR13035:SF0">
    <property type="entry name" value="PROTEIN N-TERMINAL GLUTAMINE AMIDOHYDROLASE"/>
    <property type="match status" value="1"/>
</dbReference>
<dbReference type="Pfam" id="PF09764">
    <property type="entry name" value="Nt_Gln_amidase"/>
    <property type="match status" value="1"/>
</dbReference>
<sequence>MTTDFLFPKIADCSYVSCYCEENVWKLCEQVKRTRPEELSKCYAVFVSNEGRTVPLWRQKAGRGDDQVVIWDYHVFFMHNPLPNRCLVFDLDTTLPFPTYFHKYVTETFRSDLALRPEHHRFFRVIPADTYLIEFSSDRRHMRRPDGSWIKPPPSYPPILSNTNLHCLGDFICMSAGKGPGAVYSLSEFVQNFYKSPHVGVQQNK</sequence>
<proteinExistence type="inferred from homology"/>
<evidence type="ECO:0000250" key="1"/>
<evidence type="ECO:0000250" key="2">
    <source>
        <dbReference type="UniProtKB" id="Q80WB5"/>
    </source>
</evidence>
<evidence type="ECO:0000250" key="3">
    <source>
        <dbReference type="UniProtKB" id="Q96HA8"/>
    </source>
</evidence>
<evidence type="ECO:0000305" key="4"/>
<accession>B4MDT2</accession>
<organism>
    <name type="scientific">Drosophila virilis</name>
    <name type="common">Fruit fly</name>
    <dbReference type="NCBI Taxonomy" id="7244"/>
    <lineage>
        <taxon>Eukaryota</taxon>
        <taxon>Metazoa</taxon>
        <taxon>Ecdysozoa</taxon>
        <taxon>Arthropoda</taxon>
        <taxon>Hexapoda</taxon>
        <taxon>Insecta</taxon>
        <taxon>Pterygota</taxon>
        <taxon>Neoptera</taxon>
        <taxon>Endopterygota</taxon>
        <taxon>Diptera</taxon>
        <taxon>Brachycera</taxon>
        <taxon>Muscomorpha</taxon>
        <taxon>Ephydroidea</taxon>
        <taxon>Drosophilidae</taxon>
        <taxon>Drosophila</taxon>
    </lineage>
</organism>
<reference key="1">
    <citation type="journal article" date="2007" name="Nature">
        <title>Evolution of genes and genomes on the Drosophila phylogeny.</title>
        <authorList>
            <consortium name="Drosophila 12 genomes consortium"/>
        </authorList>
    </citation>
    <scope>NUCLEOTIDE SEQUENCE [LARGE SCALE GENOMIC DNA]</scope>
    <source>
        <strain>Tucson 15010-1051.87</strain>
    </source>
</reference>
<gene>
    <name type="primary">tun</name>
    <name type="ORF">GJ18123</name>
</gene>
<feature type="chain" id="PRO_0000381831" description="Protein N-terminal glutamine amidohydrolase">
    <location>
        <begin position="1"/>
        <end position="205"/>
    </location>
</feature>
<feature type="active site" evidence="1">
    <location>
        <position position="20"/>
    </location>
</feature>
<feature type="active site" evidence="1">
    <location>
        <position position="74"/>
    </location>
</feature>
<feature type="active site" evidence="1">
    <location>
        <position position="90"/>
    </location>
</feature>